<protein>
    <recommendedName>
        <fullName>Adenosine 3'-phospho 5'-phosphosulfate transporter 2</fullName>
    </recommendedName>
    <alternativeName>
        <fullName>PAPS transporter 2</fullName>
    </alternativeName>
    <alternativeName>
        <fullName>Solute carrier family 35 member B3 homolog</fullName>
    </alternativeName>
</protein>
<reference evidence="4" key="1">
    <citation type="journal article" date="2007" name="Science">
        <title>Genome sequence of Aedes aegypti, a major arbovirus vector.</title>
        <authorList>
            <person name="Nene V."/>
            <person name="Wortman J.R."/>
            <person name="Lawson D."/>
            <person name="Haas B.J."/>
            <person name="Kodira C.D."/>
            <person name="Tu Z.J."/>
            <person name="Loftus B.J."/>
            <person name="Xi Z."/>
            <person name="Megy K."/>
            <person name="Grabherr M."/>
            <person name="Ren Q."/>
            <person name="Zdobnov E.M."/>
            <person name="Lobo N.F."/>
            <person name="Campbell K.S."/>
            <person name="Brown S.E."/>
            <person name="Bonaldo M.F."/>
            <person name="Zhu J."/>
            <person name="Sinkins S.P."/>
            <person name="Hogenkamp D.G."/>
            <person name="Amedeo P."/>
            <person name="Arensburger P."/>
            <person name="Atkinson P.W."/>
            <person name="Bidwell S.L."/>
            <person name="Biedler J."/>
            <person name="Birney E."/>
            <person name="Bruggner R.V."/>
            <person name="Costas J."/>
            <person name="Coy M.R."/>
            <person name="Crabtree J."/>
            <person name="Crawford M."/>
            <person name="DeBruyn B."/>
            <person name="DeCaprio D."/>
            <person name="Eiglmeier K."/>
            <person name="Eisenstadt E."/>
            <person name="El-Dorry H."/>
            <person name="Gelbart W.M."/>
            <person name="Gomes S.L."/>
            <person name="Hammond M."/>
            <person name="Hannick L.I."/>
            <person name="Hogan J.R."/>
            <person name="Holmes M.H."/>
            <person name="Jaffe D."/>
            <person name="Johnston S.J."/>
            <person name="Kennedy R.C."/>
            <person name="Koo H."/>
            <person name="Kravitz S."/>
            <person name="Kriventseva E.V."/>
            <person name="Kulp D."/>
            <person name="Labutti K."/>
            <person name="Lee E."/>
            <person name="Li S."/>
            <person name="Lovin D.D."/>
            <person name="Mao C."/>
            <person name="Mauceli E."/>
            <person name="Menck C.F."/>
            <person name="Miller J.R."/>
            <person name="Montgomery P."/>
            <person name="Mori A."/>
            <person name="Nascimento A.L."/>
            <person name="Naveira H.F."/>
            <person name="Nusbaum C."/>
            <person name="O'Leary S.B."/>
            <person name="Orvis J."/>
            <person name="Pertea M."/>
            <person name="Quesneville H."/>
            <person name="Reidenbach K.R."/>
            <person name="Rogers Y.-H.C."/>
            <person name="Roth C.W."/>
            <person name="Schneider J.R."/>
            <person name="Schatz M."/>
            <person name="Shumway M."/>
            <person name="Stanke M."/>
            <person name="Stinson E.O."/>
            <person name="Tubio J.M.C."/>
            <person name="Vanzee J.P."/>
            <person name="Verjovski-Almeida S."/>
            <person name="Werner D."/>
            <person name="White O.R."/>
            <person name="Wyder S."/>
            <person name="Zeng Q."/>
            <person name="Zhao Q."/>
            <person name="Zhao Y."/>
            <person name="Hill C.A."/>
            <person name="Raikhel A.S."/>
            <person name="Soares M.B."/>
            <person name="Knudson D.L."/>
            <person name="Lee N.H."/>
            <person name="Galagan J."/>
            <person name="Salzberg S.L."/>
            <person name="Paulsen I.T."/>
            <person name="Dimopoulos G."/>
            <person name="Collins F.H."/>
            <person name="Bruce B."/>
            <person name="Fraser-Liggett C.M."/>
            <person name="Severson D.W."/>
        </authorList>
    </citation>
    <scope>NUCLEOTIDE SEQUENCE [LARGE SCALE GENOMIC DNA]</scope>
    <source>
        <strain>LVPib12</strain>
    </source>
</reference>
<organism>
    <name type="scientific">Aedes aegypti</name>
    <name type="common">Yellowfever mosquito</name>
    <name type="synonym">Culex aegypti</name>
    <dbReference type="NCBI Taxonomy" id="7159"/>
    <lineage>
        <taxon>Eukaryota</taxon>
        <taxon>Metazoa</taxon>
        <taxon>Ecdysozoa</taxon>
        <taxon>Arthropoda</taxon>
        <taxon>Hexapoda</taxon>
        <taxon>Insecta</taxon>
        <taxon>Pterygota</taxon>
        <taxon>Neoptera</taxon>
        <taxon>Endopterygota</taxon>
        <taxon>Diptera</taxon>
        <taxon>Nematocera</taxon>
        <taxon>Culicoidea</taxon>
        <taxon>Culicidae</taxon>
        <taxon>Culicinae</taxon>
        <taxon>Aedini</taxon>
        <taxon>Aedes</taxon>
        <taxon>Stegomyia</taxon>
    </lineage>
</organism>
<name>S35B3_AEDAE</name>
<comment type="function">
    <text evidence="1">Mediates the transport of adenosine 3'-phospho 5'-phosphosulfate (PAPS), from cytosol into Golgi. PAPS is a universal sulfuryl donor for sulfation events that take place in the Golgi. Essential for viability. Involved in glycosaminoglycan synthesis and the subsequent signaling. May be involved in hh and dpp signaling by controlling the sulfation of heparan sulfate (HS) (By similarity).</text>
</comment>
<comment type="subcellular location">
    <subcellularLocation>
        <location evidence="1">Golgi apparatus membrane</location>
        <topology evidence="1">Multi-pass membrane protein</topology>
    </subcellularLocation>
</comment>
<comment type="similarity">
    <text evidence="2">Belongs to the nucleotide-sugar transporter family. SLC35B subfamily.</text>
</comment>
<evidence type="ECO:0000250" key="1">
    <source>
        <dbReference type="UniProtKB" id="Q9VVD9"/>
    </source>
</evidence>
<evidence type="ECO:0000255" key="2"/>
<evidence type="ECO:0000256" key="3">
    <source>
        <dbReference type="SAM" id="MobiDB-lite"/>
    </source>
</evidence>
<evidence type="ECO:0000312" key="4">
    <source>
        <dbReference type="EMBL" id="EAT44004.1"/>
    </source>
</evidence>
<sequence length="382" mass="42557">MSVSNRNGNGSEVIYVGDRSTNRPPRNAPSPDEDRKEVKILFFDLTYYNTTTKFLLCCAGVFVLYLLYGYMQELIFTLDGFKPYGWFLTLVQFAYYTVFGYVERSLESKRVPRCIPMKTYVLLAFLTLGTMGLSNSSLGYLNYPTQVIFKCCKLVPVLIGSILIQGKKHGPLDFLAAIAMCLGLTLFTLADSQVSPNFNPFGVLLISLALLCDAAIGNVQEKAMREHKAPNNEVVIYSYGIGFVYLSVIMLLTGNLFSGITFCMKYPVETFGYAFLFSLSGYLGIQIVLTLVRTCGAPLAATVTTARKAVTIALSFVFFSKPFTINYLWSGLIVVLGIYLNVYSKRSKLTFADLNRTAERIYRKLVPQRGGSSSTKKLLLEV</sequence>
<feature type="chain" id="PRO_0000307350" description="Adenosine 3'-phospho 5'-phosphosulfate transporter 2">
    <location>
        <begin position="1"/>
        <end position="382"/>
    </location>
</feature>
<feature type="transmembrane region" description="Helical" evidence="2">
    <location>
        <begin position="56"/>
        <end position="76"/>
    </location>
</feature>
<feature type="transmembrane region" description="Helical" evidence="2">
    <location>
        <begin position="83"/>
        <end position="103"/>
    </location>
</feature>
<feature type="transmembrane region" description="Helical" evidence="2">
    <location>
        <begin position="121"/>
        <end position="141"/>
    </location>
</feature>
<feature type="transmembrane region" description="Helical" evidence="2">
    <location>
        <begin position="144"/>
        <end position="164"/>
    </location>
</feature>
<feature type="transmembrane region" description="Helical" evidence="2">
    <location>
        <begin position="170"/>
        <end position="190"/>
    </location>
</feature>
<feature type="transmembrane region" description="Helical" evidence="2">
    <location>
        <begin position="197"/>
        <end position="217"/>
    </location>
</feature>
<feature type="transmembrane region" description="Helical" evidence="2">
    <location>
        <begin position="234"/>
        <end position="254"/>
    </location>
</feature>
<feature type="transmembrane region" description="Helical" evidence="2">
    <location>
        <begin position="271"/>
        <end position="291"/>
    </location>
</feature>
<feature type="transmembrane region" description="Helical" evidence="2">
    <location>
        <begin position="299"/>
        <end position="319"/>
    </location>
</feature>
<feature type="transmembrane region" description="Helical" evidence="2">
    <location>
        <begin position="323"/>
        <end position="343"/>
    </location>
</feature>
<feature type="region of interest" description="Disordered" evidence="3">
    <location>
        <begin position="1"/>
        <end position="33"/>
    </location>
</feature>
<feature type="compositionally biased region" description="Polar residues" evidence="3">
    <location>
        <begin position="1"/>
        <end position="10"/>
    </location>
</feature>
<accession>Q17CE7</accession>
<dbReference type="EMBL" id="CH477309">
    <property type="protein sequence ID" value="EAT44004.1"/>
    <property type="molecule type" value="Genomic_DNA"/>
</dbReference>
<dbReference type="RefSeq" id="XP_001649448.1">
    <property type="nucleotide sequence ID" value="XM_001649398.1"/>
</dbReference>
<dbReference type="SMR" id="Q17CE7"/>
<dbReference type="FunCoup" id="Q17CE7">
    <property type="interactions" value="1138"/>
</dbReference>
<dbReference type="STRING" id="7159.Q17CE7"/>
<dbReference type="PaxDb" id="7159-AAEL004594-PA"/>
<dbReference type="eggNOG" id="KOG1582">
    <property type="taxonomic scope" value="Eukaryota"/>
</dbReference>
<dbReference type="HOGENOM" id="CLU_036019_2_0_1"/>
<dbReference type="InParanoid" id="Q17CE7"/>
<dbReference type="OMA" id="YNRTTQF"/>
<dbReference type="PhylomeDB" id="Q17CE7"/>
<dbReference type="Proteomes" id="UP000008820">
    <property type="component" value="Unassembled WGS sequence"/>
</dbReference>
<dbReference type="Proteomes" id="UP000682892">
    <property type="component" value="Unassembled WGS sequence"/>
</dbReference>
<dbReference type="GO" id="GO:0005789">
    <property type="term" value="C:endoplasmic reticulum membrane"/>
    <property type="evidence" value="ECO:0007669"/>
    <property type="project" value="TreeGrafter"/>
</dbReference>
<dbReference type="GO" id="GO:0005794">
    <property type="term" value="C:Golgi apparatus"/>
    <property type="evidence" value="ECO:0000250"/>
    <property type="project" value="UniProtKB"/>
</dbReference>
<dbReference type="GO" id="GO:0000139">
    <property type="term" value="C:Golgi membrane"/>
    <property type="evidence" value="ECO:0007669"/>
    <property type="project" value="UniProtKB-SubCell"/>
</dbReference>
<dbReference type="GO" id="GO:0046964">
    <property type="term" value="F:3'-phosphoadenosine 5'-phosphosulfate transmembrane transporter activity"/>
    <property type="evidence" value="ECO:0000250"/>
    <property type="project" value="UniProtKB"/>
</dbReference>
<dbReference type="GO" id="GO:0046963">
    <property type="term" value="P:3'-phosphoadenosine 5'-phosphosulfate transport"/>
    <property type="evidence" value="ECO:0000250"/>
    <property type="project" value="UniProtKB"/>
</dbReference>
<dbReference type="InterPro" id="IPR013657">
    <property type="entry name" value="SCL35B1-4/HUT1"/>
</dbReference>
<dbReference type="PANTHER" id="PTHR10778:SF8">
    <property type="entry name" value="ADENOSINE 3'-PHOSPHO 5'-PHOSPHOSULFATE TRANSPORTER 2"/>
    <property type="match status" value="1"/>
</dbReference>
<dbReference type="PANTHER" id="PTHR10778">
    <property type="entry name" value="SOLUTE CARRIER FAMILY 35 MEMBER B"/>
    <property type="match status" value="1"/>
</dbReference>
<dbReference type="Pfam" id="PF08449">
    <property type="entry name" value="UAA"/>
    <property type="match status" value="1"/>
</dbReference>
<keyword id="KW-0217">Developmental protein</keyword>
<keyword id="KW-0333">Golgi apparatus</keyword>
<keyword id="KW-0472">Membrane</keyword>
<keyword id="KW-1185">Reference proteome</keyword>
<keyword id="KW-0812">Transmembrane</keyword>
<keyword id="KW-1133">Transmembrane helix</keyword>
<keyword id="KW-0813">Transport</keyword>
<gene>
    <name evidence="1" type="primary">Papst2</name>
    <name type="ORF">AAEL004594</name>
</gene>
<proteinExistence type="inferred from homology"/>